<feature type="chain" id="PRO_1000021391" description="Ribonuclease P protein component">
    <location>
        <begin position="1"/>
        <end position="139"/>
    </location>
</feature>
<reference key="1">
    <citation type="journal article" date="2006" name="DNA Res.">
        <title>Genome sequence of the cat pathogen, Chlamydophila felis.</title>
        <authorList>
            <person name="Azuma Y."/>
            <person name="Hirakawa H."/>
            <person name="Yamashita A."/>
            <person name="Cai Y."/>
            <person name="Rahman M.A."/>
            <person name="Suzuki H."/>
            <person name="Mitaku S."/>
            <person name="Toh H."/>
            <person name="Goto S."/>
            <person name="Murakami T."/>
            <person name="Sugi K."/>
            <person name="Hayashi H."/>
            <person name="Fukushi H."/>
            <person name="Hattori M."/>
            <person name="Kuhara S."/>
            <person name="Shirai M."/>
        </authorList>
    </citation>
    <scope>NUCLEOTIDE SEQUENCE [LARGE SCALE GENOMIC DNA]</scope>
    <source>
        <strain>Fe/C-56</strain>
    </source>
</reference>
<keyword id="KW-0255">Endonuclease</keyword>
<keyword id="KW-0378">Hydrolase</keyword>
<keyword id="KW-0540">Nuclease</keyword>
<keyword id="KW-0694">RNA-binding</keyword>
<keyword id="KW-0819">tRNA processing</keyword>
<gene>
    <name evidence="1" type="primary">rnpA</name>
    <name type="ordered locus">CF0178</name>
</gene>
<sequence>MHRSTLPKRARVLKRKQFLYISRTGSHCQGSQVIFQVAPSKYPGCCKLGITVSKKFGKAHKRNYFKRLVREAFRQKRHSLPACQIVVMPKNKQQPRFRDLLQDFSQQIPEAVESKCAKNKLTTGVEYNPKNEKCETAPL</sequence>
<accession>Q255T8</accession>
<dbReference type="EC" id="3.1.26.5" evidence="1"/>
<dbReference type="EMBL" id="AP006861">
    <property type="protein sequence ID" value="BAE80950.1"/>
    <property type="molecule type" value="Genomic_DNA"/>
</dbReference>
<dbReference type="RefSeq" id="WP_011457735.1">
    <property type="nucleotide sequence ID" value="NC_007899.1"/>
</dbReference>
<dbReference type="SMR" id="Q255T8"/>
<dbReference type="STRING" id="264202.CF0178"/>
<dbReference type="KEGG" id="cfe:CF0178"/>
<dbReference type="eggNOG" id="COG0594">
    <property type="taxonomic scope" value="Bacteria"/>
</dbReference>
<dbReference type="HOGENOM" id="CLU_117179_9_2_0"/>
<dbReference type="OrthoDB" id="9810867at2"/>
<dbReference type="Proteomes" id="UP000001260">
    <property type="component" value="Chromosome"/>
</dbReference>
<dbReference type="GO" id="GO:0030677">
    <property type="term" value="C:ribonuclease P complex"/>
    <property type="evidence" value="ECO:0007669"/>
    <property type="project" value="TreeGrafter"/>
</dbReference>
<dbReference type="GO" id="GO:0042781">
    <property type="term" value="F:3'-tRNA processing endoribonuclease activity"/>
    <property type="evidence" value="ECO:0007669"/>
    <property type="project" value="TreeGrafter"/>
</dbReference>
<dbReference type="GO" id="GO:0004526">
    <property type="term" value="F:ribonuclease P activity"/>
    <property type="evidence" value="ECO:0007669"/>
    <property type="project" value="UniProtKB-UniRule"/>
</dbReference>
<dbReference type="GO" id="GO:0000049">
    <property type="term" value="F:tRNA binding"/>
    <property type="evidence" value="ECO:0007669"/>
    <property type="project" value="UniProtKB-UniRule"/>
</dbReference>
<dbReference type="GO" id="GO:0001682">
    <property type="term" value="P:tRNA 5'-leader removal"/>
    <property type="evidence" value="ECO:0007669"/>
    <property type="project" value="UniProtKB-UniRule"/>
</dbReference>
<dbReference type="Gene3D" id="3.30.230.10">
    <property type="match status" value="1"/>
</dbReference>
<dbReference type="HAMAP" id="MF_00227">
    <property type="entry name" value="RNase_P"/>
    <property type="match status" value="1"/>
</dbReference>
<dbReference type="InterPro" id="IPR020568">
    <property type="entry name" value="Ribosomal_Su5_D2-typ_SF"/>
</dbReference>
<dbReference type="InterPro" id="IPR014721">
    <property type="entry name" value="Ribsml_uS5_D2-typ_fold_subgr"/>
</dbReference>
<dbReference type="InterPro" id="IPR000100">
    <property type="entry name" value="RNase_P"/>
</dbReference>
<dbReference type="InterPro" id="IPR020539">
    <property type="entry name" value="RNase_P_CS"/>
</dbReference>
<dbReference type="NCBIfam" id="TIGR00188">
    <property type="entry name" value="rnpA"/>
    <property type="match status" value="1"/>
</dbReference>
<dbReference type="PANTHER" id="PTHR33992">
    <property type="entry name" value="RIBONUCLEASE P PROTEIN COMPONENT"/>
    <property type="match status" value="1"/>
</dbReference>
<dbReference type="PANTHER" id="PTHR33992:SF1">
    <property type="entry name" value="RIBONUCLEASE P PROTEIN COMPONENT"/>
    <property type="match status" value="1"/>
</dbReference>
<dbReference type="Pfam" id="PF00825">
    <property type="entry name" value="Ribonuclease_P"/>
    <property type="match status" value="1"/>
</dbReference>
<dbReference type="SUPFAM" id="SSF54211">
    <property type="entry name" value="Ribosomal protein S5 domain 2-like"/>
    <property type="match status" value="1"/>
</dbReference>
<dbReference type="PROSITE" id="PS00648">
    <property type="entry name" value="RIBONUCLEASE_P"/>
    <property type="match status" value="1"/>
</dbReference>
<comment type="function">
    <text evidence="1">RNaseP catalyzes the removal of the 5'-leader sequence from pre-tRNA to produce the mature 5'-terminus. It can also cleave other RNA substrates such as 4.5S RNA. The protein component plays an auxiliary but essential role in vivo by binding to the 5'-leader sequence and broadening the substrate specificity of the ribozyme.</text>
</comment>
<comment type="catalytic activity">
    <reaction evidence="1">
        <text>Endonucleolytic cleavage of RNA, removing 5'-extranucleotides from tRNA precursor.</text>
        <dbReference type="EC" id="3.1.26.5"/>
    </reaction>
</comment>
<comment type="subunit">
    <text evidence="1">Consists of a catalytic RNA component (M1 or rnpB) and a protein subunit.</text>
</comment>
<comment type="similarity">
    <text evidence="1">Belongs to the RnpA family.</text>
</comment>
<evidence type="ECO:0000255" key="1">
    <source>
        <dbReference type="HAMAP-Rule" id="MF_00227"/>
    </source>
</evidence>
<protein>
    <recommendedName>
        <fullName evidence="1">Ribonuclease P protein component</fullName>
        <shortName evidence="1">RNase P protein</shortName>
        <shortName evidence="1">RNaseP protein</shortName>
        <ecNumber evidence="1">3.1.26.5</ecNumber>
    </recommendedName>
    <alternativeName>
        <fullName evidence="1">Protein C5</fullName>
    </alternativeName>
</protein>
<proteinExistence type="inferred from homology"/>
<name>RNPA_CHLFF</name>
<organism>
    <name type="scientific">Chlamydia felis (strain Fe/C-56)</name>
    <name type="common">Chlamydophila felis</name>
    <dbReference type="NCBI Taxonomy" id="264202"/>
    <lineage>
        <taxon>Bacteria</taxon>
        <taxon>Pseudomonadati</taxon>
        <taxon>Chlamydiota</taxon>
        <taxon>Chlamydiia</taxon>
        <taxon>Chlamydiales</taxon>
        <taxon>Chlamydiaceae</taxon>
        <taxon>Chlamydia/Chlamydophila group</taxon>
        <taxon>Chlamydia</taxon>
    </lineage>
</organism>